<gene>
    <name type="ORF">1A9.200</name>
    <name type="ORF">NCU01021</name>
</gene>
<organism>
    <name type="scientific">Neurospora crassa (strain ATCC 24698 / 74-OR23-1A / CBS 708.71 / DSM 1257 / FGSC 987)</name>
    <dbReference type="NCBI Taxonomy" id="367110"/>
    <lineage>
        <taxon>Eukaryota</taxon>
        <taxon>Fungi</taxon>
        <taxon>Dikarya</taxon>
        <taxon>Ascomycota</taxon>
        <taxon>Pezizomycotina</taxon>
        <taxon>Sordariomycetes</taxon>
        <taxon>Sordariomycetidae</taxon>
        <taxon>Sordariales</taxon>
        <taxon>Sordariaceae</taxon>
        <taxon>Neurospora</taxon>
    </lineage>
</organism>
<reference key="1">
    <citation type="journal article" date="2003" name="Nucleic Acids Res.">
        <title>What's in the genome of a filamentous fungus? Analysis of the Neurospora genome sequence.</title>
        <authorList>
            <person name="Mannhaupt G."/>
            <person name="Montrone C."/>
            <person name="Haase D."/>
            <person name="Mewes H.-W."/>
            <person name="Aign V."/>
            <person name="Hoheisel J.D."/>
            <person name="Fartmann B."/>
            <person name="Nyakatura G."/>
            <person name="Kempken F."/>
            <person name="Maier J."/>
            <person name="Schulte U."/>
        </authorList>
    </citation>
    <scope>NUCLEOTIDE SEQUENCE [LARGE SCALE GENOMIC DNA]</scope>
    <source>
        <strain>ATCC 24698 / 74-OR23-1A / CBS 708.71 / DSM 1257 / FGSC 987</strain>
    </source>
</reference>
<reference key="2">
    <citation type="journal article" date="2003" name="Nature">
        <title>The genome sequence of the filamentous fungus Neurospora crassa.</title>
        <authorList>
            <person name="Galagan J.E."/>
            <person name="Calvo S.E."/>
            <person name="Borkovich K.A."/>
            <person name="Selker E.U."/>
            <person name="Read N.D."/>
            <person name="Jaffe D.B."/>
            <person name="FitzHugh W."/>
            <person name="Ma L.-J."/>
            <person name="Smirnov S."/>
            <person name="Purcell S."/>
            <person name="Rehman B."/>
            <person name="Elkins T."/>
            <person name="Engels R."/>
            <person name="Wang S."/>
            <person name="Nielsen C.B."/>
            <person name="Butler J."/>
            <person name="Endrizzi M."/>
            <person name="Qui D."/>
            <person name="Ianakiev P."/>
            <person name="Bell-Pedersen D."/>
            <person name="Nelson M.A."/>
            <person name="Werner-Washburne M."/>
            <person name="Selitrennikoff C.P."/>
            <person name="Kinsey J.A."/>
            <person name="Braun E.L."/>
            <person name="Zelter A."/>
            <person name="Schulte U."/>
            <person name="Kothe G.O."/>
            <person name="Jedd G."/>
            <person name="Mewes H.-W."/>
            <person name="Staben C."/>
            <person name="Marcotte E."/>
            <person name="Greenberg D."/>
            <person name="Roy A."/>
            <person name="Foley K."/>
            <person name="Naylor J."/>
            <person name="Stange-Thomann N."/>
            <person name="Barrett R."/>
            <person name="Gnerre S."/>
            <person name="Kamal M."/>
            <person name="Kamvysselis M."/>
            <person name="Mauceli E.W."/>
            <person name="Bielke C."/>
            <person name="Rudd S."/>
            <person name="Frishman D."/>
            <person name="Krystofova S."/>
            <person name="Rasmussen C."/>
            <person name="Metzenberg R.L."/>
            <person name="Perkins D.D."/>
            <person name="Kroken S."/>
            <person name="Cogoni C."/>
            <person name="Macino G."/>
            <person name="Catcheside D.E.A."/>
            <person name="Li W."/>
            <person name="Pratt R.J."/>
            <person name="Osmani S.A."/>
            <person name="DeSouza C.P.C."/>
            <person name="Glass N.L."/>
            <person name="Orbach M.J."/>
            <person name="Berglund J.A."/>
            <person name="Voelker R."/>
            <person name="Yarden O."/>
            <person name="Plamann M."/>
            <person name="Seiler S."/>
            <person name="Dunlap J.C."/>
            <person name="Radford A."/>
            <person name="Aramayo R."/>
            <person name="Natvig D.O."/>
            <person name="Alex L.A."/>
            <person name="Mannhaupt G."/>
            <person name="Ebbole D.J."/>
            <person name="Freitag M."/>
            <person name="Paulsen I."/>
            <person name="Sachs M.S."/>
            <person name="Lander E.S."/>
            <person name="Nusbaum C."/>
            <person name="Birren B.W."/>
        </authorList>
    </citation>
    <scope>NUCLEOTIDE SEQUENCE [LARGE SCALE GENOMIC DNA]</scope>
    <source>
        <strain>ATCC 24698 / 74-OR23-1A / CBS 708.71 / DSM 1257 / FGSC 987</strain>
    </source>
</reference>
<accession>Q9P748</accession>
<sequence length="369" mass="39694">MAVDQESFVHLSRPLAPNVLGFGVSNAPLTVNIQPQAVFSIIDHAVRRDDRDTQSTRVIGALVGVRSEDGSEVEVRSTFAIPHTENEDQVEVDVEYQKNMLALTLKANPRETLLGWYTTSHELNSFSALIQNFFASPETGTFPHPAVHLTIGTEAGATIDTKTYISAPVAVSPERAAESCLFIEVPHKLLFTDAERGALGSVAAAADAESRSAPVVSDIENLAQALETVSDLLERVSGFVGEVLDEERDGNHALGQYLMNALSLAPKVSNLAIENDFNNHIQDVLMVSYLANTIRTQIELSQRLATAKLDEGKEGGEKKDGEGAEGDKKTDGQRGQRGQGGKRGGRSGGAGGRGGREQREPREPREAAE</sequence>
<evidence type="ECO:0000255" key="1">
    <source>
        <dbReference type="HAMAP-Rule" id="MF_03005"/>
    </source>
</evidence>
<evidence type="ECO:0000255" key="2">
    <source>
        <dbReference type="PROSITE-ProRule" id="PRU01182"/>
    </source>
</evidence>
<evidence type="ECO:0000256" key="3">
    <source>
        <dbReference type="SAM" id="MobiDB-lite"/>
    </source>
</evidence>
<comment type="function">
    <text evidence="1">Component of the eukaryotic translation initiation factor 3 (eIF-3) complex, which is involved in protein synthesis of a specialized repertoire of mRNAs and, together with other initiation factors, stimulates binding of mRNA and methionyl-tRNAi to the 40S ribosome. The eIF-3 complex specifically targets and initiates translation of a subset of mRNAs involved in cell proliferation.</text>
</comment>
<comment type="subunit">
    <text evidence="1">Component of the eukaryotic translation initiation factor 3 (eIF-3) complex.</text>
</comment>
<comment type="subcellular location">
    <subcellularLocation>
        <location evidence="1">Cytoplasm</location>
    </subcellularLocation>
</comment>
<comment type="similarity">
    <text evidence="1">Belongs to the eIF-3 subunit F family.</text>
</comment>
<protein>
    <recommendedName>
        <fullName evidence="1">Eukaryotic translation initiation factor 3 subunit F</fullName>
        <shortName evidence="1">eIF3f</shortName>
    </recommendedName>
</protein>
<dbReference type="EMBL" id="AL353817">
    <property type="protein sequence ID" value="CAB88517.2"/>
    <property type="molecule type" value="Genomic_DNA"/>
</dbReference>
<dbReference type="EMBL" id="CM002240">
    <property type="protein sequence ID" value="EAA32397.1"/>
    <property type="molecule type" value="Genomic_DNA"/>
</dbReference>
<dbReference type="PIR" id="T48720">
    <property type="entry name" value="T48720"/>
</dbReference>
<dbReference type="RefSeq" id="XP_961633.1">
    <property type="nucleotide sequence ID" value="XM_956540.2"/>
</dbReference>
<dbReference type="SMR" id="Q9P748"/>
<dbReference type="STRING" id="367110.Q9P748"/>
<dbReference type="PaxDb" id="5141-EFNCRP00000004329"/>
<dbReference type="EnsemblFungi" id="EAA32397">
    <property type="protein sequence ID" value="EAA32397"/>
    <property type="gene ID" value="NCU01021"/>
</dbReference>
<dbReference type="GeneID" id="3877808"/>
<dbReference type="KEGG" id="ncr:NCU01021"/>
<dbReference type="VEuPathDB" id="FungiDB:NCU01021"/>
<dbReference type="HOGENOM" id="CLU_027018_0_0_1"/>
<dbReference type="InParanoid" id="Q9P748"/>
<dbReference type="OMA" id="EYFVHFH"/>
<dbReference type="OrthoDB" id="25498at2759"/>
<dbReference type="Proteomes" id="UP000001805">
    <property type="component" value="Chromosome 2, Linkage Group V"/>
</dbReference>
<dbReference type="GO" id="GO:0016282">
    <property type="term" value="C:eukaryotic 43S preinitiation complex"/>
    <property type="evidence" value="ECO:0007669"/>
    <property type="project" value="UniProtKB-UniRule"/>
</dbReference>
<dbReference type="GO" id="GO:0033290">
    <property type="term" value="C:eukaryotic 48S preinitiation complex"/>
    <property type="evidence" value="ECO:0007669"/>
    <property type="project" value="UniProtKB-UniRule"/>
</dbReference>
<dbReference type="GO" id="GO:0071540">
    <property type="term" value="C:eukaryotic translation initiation factor 3 complex, eIF3e"/>
    <property type="evidence" value="ECO:0007669"/>
    <property type="project" value="EnsemblFungi"/>
</dbReference>
<dbReference type="GO" id="GO:0071541">
    <property type="term" value="C:eukaryotic translation initiation factor 3 complex, eIF3m"/>
    <property type="evidence" value="ECO:0000318"/>
    <property type="project" value="GO_Central"/>
</dbReference>
<dbReference type="GO" id="GO:0008237">
    <property type="term" value="F:metallopeptidase activity"/>
    <property type="evidence" value="ECO:0007669"/>
    <property type="project" value="InterPro"/>
</dbReference>
<dbReference type="GO" id="GO:0003743">
    <property type="term" value="F:translation initiation factor activity"/>
    <property type="evidence" value="ECO:0007669"/>
    <property type="project" value="UniProtKB-UniRule"/>
</dbReference>
<dbReference type="GO" id="GO:0031369">
    <property type="term" value="F:translation initiation factor binding"/>
    <property type="evidence" value="ECO:0000318"/>
    <property type="project" value="GO_Central"/>
</dbReference>
<dbReference type="GO" id="GO:0001732">
    <property type="term" value="P:formation of cytoplasmic translation initiation complex"/>
    <property type="evidence" value="ECO:0007669"/>
    <property type="project" value="UniProtKB-UniRule"/>
</dbReference>
<dbReference type="GO" id="GO:0006413">
    <property type="term" value="P:translational initiation"/>
    <property type="evidence" value="ECO:0000318"/>
    <property type="project" value="GO_Central"/>
</dbReference>
<dbReference type="CDD" id="cd08064">
    <property type="entry name" value="MPN_eIF3f"/>
    <property type="match status" value="1"/>
</dbReference>
<dbReference type="FunFam" id="3.40.140.10:FF:000019">
    <property type="entry name" value="Eukaryotic translation initiation factor 3 subunit F"/>
    <property type="match status" value="1"/>
</dbReference>
<dbReference type="Gene3D" id="3.40.140.10">
    <property type="entry name" value="Cytidine Deaminase, domain 2"/>
    <property type="match status" value="1"/>
</dbReference>
<dbReference type="HAMAP" id="MF_03005">
    <property type="entry name" value="eIF3f"/>
    <property type="match status" value="1"/>
</dbReference>
<dbReference type="InterPro" id="IPR027531">
    <property type="entry name" value="eIF3f"/>
</dbReference>
<dbReference type="InterPro" id="IPR024969">
    <property type="entry name" value="EIF3F/CSN6-like_C"/>
</dbReference>
<dbReference type="InterPro" id="IPR000555">
    <property type="entry name" value="JAMM/MPN+_dom"/>
</dbReference>
<dbReference type="InterPro" id="IPR037518">
    <property type="entry name" value="MPN"/>
</dbReference>
<dbReference type="PANTHER" id="PTHR10540:SF6">
    <property type="entry name" value="EUKARYOTIC TRANSLATION INITIATION FACTOR 3 SUBUNIT F"/>
    <property type="match status" value="1"/>
</dbReference>
<dbReference type="PANTHER" id="PTHR10540">
    <property type="entry name" value="EUKARYOTIC TRANSLATION INITIATION FACTOR 3 SUBUNIT F-RELATED"/>
    <property type="match status" value="1"/>
</dbReference>
<dbReference type="Pfam" id="PF01398">
    <property type="entry name" value="JAB"/>
    <property type="match status" value="1"/>
</dbReference>
<dbReference type="Pfam" id="PF13012">
    <property type="entry name" value="MitMem_reg"/>
    <property type="match status" value="1"/>
</dbReference>
<dbReference type="SMART" id="SM00232">
    <property type="entry name" value="JAB_MPN"/>
    <property type="match status" value="1"/>
</dbReference>
<dbReference type="PROSITE" id="PS50249">
    <property type="entry name" value="MPN"/>
    <property type="match status" value="1"/>
</dbReference>
<name>EIF3F_NEUCR</name>
<feature type="chain" id="PRO_0000364333" description="Eukaryotic translation initiation factor 3 subunit F">
    <location>
        <begin position="1"/>
        <end position="369"/>
    </location>
</feature>
<feature type="domain" description="MPN" evidence="2">
    <location>
        <begin position="31"/>
        <end position="170"/>
    </location>
</feature>
<feature type="region of interest" description="Disordered" evidence="3">
    <location>
        <begin position="309"/>
        <end position="369"/>
    </location>
</feature>
<feature type="compositionally biased region" description="Basic and acidic residues" evidence="3">
    <location>
        <begin position="309"/>
        <end position="334"/>
    </location>
</feature>
<feature type="compositionally biased region" description="Gly residues" evidence="3">
    <location>
        <begin position="335"/>
        <end position="353"/>
    </location>
</feature>
<feature type="compositionally biased region" description="Basic and acidic residues" evidence="3">
    <location>
        <begin position="354"/>
        <end position="369"/>
    </location>
</feature>
<keyword id="KW-0963">Cytoplasm</keyword>
<keyword id="KW-0396">Initiation factor</keyword>
<keyword id="KW-0648">Protein biosynthesis</keyword>
<keyword id="KW-1185">Reference proteome</keyword>
<proteinExistence type="inferred from homology"/>